<name>PANB_SALPC</name>
<proteinExistence type="inferred from homology"/>
<gene>
    <name evidence="1" type="primary">panB</name>
    <name type="ordered locus">SPC_0196</name>
</gene>
<sequence length="263" mass="28134">MKPTTISLLQKCKQEKKRFATITAYDYSFAKLFADEGINVMLVGDSLGMTIQGHDSTLPVTVEDIAYHTRAVRRGAPNCLLLSDLPFMAYATPEQACENAAIVMRAGANMVKIEGGAWLVDTVKMLTERAVPVCGHLGLTPQSVNIFGGYKIQGRGDAGQVLLDDALALEAAGAQLLVLECVPVELAKRVTEALSIPVIGIGAGNVTDGQILVMHDAFGITGGHIPKFAKNFLAEAGDMRAAVRQYMAEVESGVYPGEEHSFH</sequence>
<protein>
    <recommendedName>
        <fullName evidence="1">3-methyl-2-oxobutanoate hydroxymethyltransferase</fullName>
        <ecNumber evidence="1">2.1.2.11</ecNumber>
    </recommendedName>
    <alternativeName>
        <fullName evidence="1">Ketopantoate hydroxymethyltransferase</fullName>
        <shortName evidence="1">KPHMT</shortName>
    </alternativeName>
</protein>
<dbReference type="EC" id="2.1.2.11" evidence="1"/>
<dbReference type="EMBL" id="CP000857">
    <property type="protein sequence ID" value="ACN44386.1"/>
    <property type="molecule type" value="Genomic_DNA"/>
</dbReference>
<dbReference type="RefSeq" id="WP_000805489.1">
    <property type="nucleotide sequence ID" value="NC_012125.1"/>
</dbReference>
<dbReference type="SMR" id="C0Q5P4"/>
<dbReference type="KEGG" id="sei:SPC_0196"/>
<dbReference type="HOGENOM" id="CLU_036645_1_0_6"/>
<dbReference type="UniPathway" id="UPA00028">
    <property type="reaction ID" value="UER00003"/>
</dbReference>
<dbReference type="Proteomes" id="UP000001599">
    <property type="component" value="Chromosome"/>
</dbReference>
<dbReference type="GO" id="GO:0005737">
    <property type="term" value="C:cytoplasm"/>
    <property type="evidence" value="ECO:0007669"/>
    <property type="project" value="UniProtKB-SubCell"/>
</dbReference>
<dbReference type="GO" id="GO:0003864">
    <property type="term" value="F:3-methyl-2-oxobutanoate hydroxymethyltransferase activity"/>
    <property type="evidence" value="ECO:0007669"/>
    <property type="project" value="UniProtKB-UniRule"/>
</dbReference>
<dbReference type="GO" id="GO:0000287">
    <property type="term" value="F:magnesium ion binding"/>
    <property type="evidence" value="ECO:0007669"/>
    <property type="project" value="TreeGrafter"/>
</dbReference>
<dbReference type="GO" id="GO:0015940">
    <property type="term" value="P:pantothenate biosynthetic process"/>
    <property type="evidence" value="ECO:0007669"/>
    <property type="project" value="UniProtKB-UniRule"/>
</dbReference>
<dbReference type="CDD" id="cd06557">
    <property type="entry name" value="KPHMT-like"/>
    <property type="match status" value="1"/>
</dbReference>
<dbReference type="FunFam" id="3.20.20.60:FF:000003">
    <property type="entry name" value="3-methyl-2-oxobutanoate hydroxymethyltransferase"/>
    <property type="match status" value="1"/>
</dbReference>
<dbReference type="Gene3D" id="3.20.20.60">
    <property type="entry name" value="Phosphoenolpyruvate-binding domains"/>
    <property type="match status" value="1"/>
</dbReference>
<dbReference type="HAMAP" id="MF_00156">
    <property type="entry name" value="PanB"/>
    <property type="match status" value="1"/>
</dbReference>
<dbReference type="InterPro" id="IPR003700">
    <property type="entry name" value="Pantoate_hydroxy_MeTrfase"/>
</dbReference>
<dbReference type="InterPro" id="IPR015813">
    <property type="entry name" value="Pyrv/PenolPyrv_kinase-like_dom"/>
</dbReference>
<dbReference type="InterPro" id="IPR040442">
    <property type="entry name" value="Pyrv_kinase-like_dom_sf"/>
</dbReference>
<dbReference type="NCBIfam" id="TIGR00222">
    <property type="entry name" value="panB"/>
    <property type="match status" value="1"/>
</dbReference>
<dbReference type="NCBIfam" id="NF001452">
    <property type="entry name" value="PRK00311.1"/>
    <property type="match status" value="1"/>
</dbReference>
<dbReference type="PANTHER" id="PTHR20881">
    <property type="entry name" value="3-METHYL-2-OXOBUTANOATE HYDROXYMETHYLTRANSFERASE"/>
    <property type="match status" value="1"/>
</dbReference>
<dbReference type="PANTHER" id="PTHR20881:SF0">
    <property type="entry name" value="3-METHYL-2-OXOBUTANOATE HYDROXYMETHYLTRANSFERASE"/>
    <property type="match status" value="1"/>
</dbReference>
<dbReference type="Pfam" id="PF02548">
    <property type="entry name" value="Pantoate_transf"/>
    <property type="match status" value="1"/>
</dbReference>
<dbReference type="PIRSF" id="PIRSF000388">
    <property type="entry name" value="Pantoate_hydroxy_MeTrfase"/>
    <property type="match status" value="1"/>
</dbReference>
<dbReference type="SUPFAM" id="SSF51621">
    <property type="entry name" value="Phosphoenolpyruvate/pyruvate domain"/>
    <property type="match status" value="1"/>
</dbReference>
<feature type="chain" id="PRO_1000123389" description="3-methyl-2-oxobutanoate hydroxymethyltransferase">
    <location>
        <begin position="1"/>
        <end position="263"/>
    </location>
</feature>
<feature type="active site" description="Proton acceptor" evidence="1">
    <location>
        <position position="180"/>
    </location>
</feature>
<feature type="binding site" evidence="1">
    <location>
        <begin position="45"/>
        <end position="46"/>
    </location>
    <ligand>
        <name>3-methyl-2-oxobutanoate</name>
        <dbReference type="ChEBI" id="CHEBI:11851"/>
    </ligand>
</feature>
<feature type="binding site" evidence="1">
    <location>
        <position position="45"/>
    </location>
    <ligand>
        <name>Mg(2+)</name>
        <dbReference type="ChEBI" id="CHEBI:18420"/>
    </ligand>
</feature>
<feature type="binding site" evidence="1">
    <location>
        <position position="84"/>
    </location>
    <ligand>
        <name>3-methyl-2-oxobutanoate</name>
        <dbReference type="ChEBI" id="CHEBI:11851"/>
    </ligand>
</feature>
<feature type="binding site" evidence="1">
    <location>
        <position position="84"/>
    </location>
    <ligand>
        <name>Mg(2+)</name>
        <dbReference type="ChEBI" id="CHEBI:18420"/>
    </ligand>
</feature>
<feature type="binding site" evidence="1">
    <location>
        <position position="112"/>
    </location>
    <ligand>
        <name>3-methyl-2-oxobutanoate</name>
        <dbReference type="ChEBI" id="CHEBI:11851"/>
    </ligand>
</feature>
<feature type="binding site" evidence="1">
    <location>
        <position position="114"/>
    </location>
    <ligand>
        <name>Mg(2+)</name>
        <dbReference type="ChEBI" id="CHEBI:18420"/>
    </ligand>
</feature>
<comment type="function">
    <text evidence="1">Catalyzes the reversible reaction in which hydroxymethyl group from 5,10-methylenetetrahydrofolate is transferred onto alpha-ketoisovalerate to form ketopantoate.</text>
</comment>
<comment type="catalytic activity">
    <reaction evidence="1">
        <text>3-methyl-2-oxobutanoate + (6R)-5,10-methylene-5,6,7,8-tetrahydrofolate + H2O = 2-dehydropantoate + (6S)-5,6,7,8-tetrahydrofolate</text>
        <dbReference type="Rhea" id="RHEA:11824"/>
        <dbReference type="ChEBI" id="CHEBI:11561"/>
        <dbReference type="ChEBI" id="CHEBI:11851"/>
        <dbReference type="ChEBI" id="CHEBI:15377"/>
        <dbReference type="ChEBI" id="CHEBI:15636"/>
        <dbReference type="ChEBI" id="CHEBI:57453"/>
        <dbReference type="EC" id="2.1.2.11"/>
    </reaction>
</comment>
<comment type="cofactor">
    <cofactor evidence="1">
        <name>Mg(2+)</name>
        <dbReference type="ChEBI" id="CHEBI:18420"/>
    </cofactor>
    <text evidence="1">Binds 1 Mg(2+) ion per subunit.</text>
</comment>
<comment type="pathway">
    <text evidence="1">Cofactor biosynthesis; (R)-pantothenate biosynthesis; (R)-pantoate from 3-methyl-2-oxobutanoate: step 1/2.</text>
</comment>
<comment type="subunit">
    <text evidence="1">Homodecamer; pentamer of dimers.</text>
</comment>
<comment type="subcellular location">
    <subcellularLocation>
        <location evidence="1">Cytoplasm</location>
    </subcellularLocation>
</comment>
<comment type="similarity">
    <text evidence="1">Belongs to the PanB family.</text>
</comment>
<organism>
    <name type="scientific">Salmonella paratyphi C (strain RKS4594)</name>
    <dbReference type="NCBI Taxonomy" id="476213"/>
    <lineage>
        <taxon>Bacteria</taxon>
        <taxon>Pseudomonadati</taxon>
        <taxon>Pseudomonadota</taxon>
        <taxon>Gammaproteobacteria</taxon>
        <taxon>Enterobacterales</taxon>
        <taxon>Enterobacteriaceae</taxon>
        <taxon>Salmonella</taxon>
    </lineage>
</organism>
<evidence type="ECO:0000255" key="1">
    <source>
        <dbReference type="HAMAP-Rule" id="MF_00156"/>
    </source>
</evidence>
<accession>C0Q5P4</accession>
<reference key="1">
    <citation type="journal article" date="2009" name="PLoS ONE">
        <title>Salmonella paratyphi C: genetic divergence from Salmonella choleraesuis and pathogenic convergence with Salmonella typhi.</title>
        <authorList>
            <person name="Liu W.-Q."/>
            <person name="Feng Y."/>
            <person name="Wang Y."/>
            <person name="Zou Q.-H."/>
            <person name="Chen F."/>
            <person name="Guo J.-T."/>
            <person name="Peng Y.-H."/>
            <person name="Jin Y."/>
            <person name="Li Y.-G."/>
            <person name="Hu S.-N."/>
            <person name="Johnston R.N."/>
            <person name="Liu G.-R."/>
            <person name="Liu S.-L."/>
        </authorList>
    </citation>
    <scope>NUCLEOTIDE SEQUENCE [LARGE SCALE GENOMIC DNA]</scope>
    <source>
        <strain>RKS4594</strain>
    </source>
</reference>
<keyword id="KW-0963">Cytoplasm</keyword>
<keyword id="KW-0460">Magnesium</keyword>
<keyword id="KW-0479">Metal-binding</keyword>
<keyword id="KW-0566">Pantothenate biosynthesis</keyword>
<keyword id="KW-0808">Transferase</keyword>